<organism>
    <name type="scientific">Dehalococcoides mccartyi (strain ATCC BAA-2266 / KCTC 15142 / 195)</name>
    <name type="common">Dehalococcoides ethenogenes (strain 195)</name>
    <dbReference type="NCBI Taxonomy" id="243164"/>
    <lineage>
        <taxon>Bacteria</taxon>
        <taxon>Bacillati</taxon>
        <taxon>Chloroflexota</taxon>
        <taxon>Dehalococcoidia</taxon>
        <taxon>Dehalococcoidales</taxon>
        <taxon>Dehalococcoidaceae</taxon>
        <taxon>Dehalococcoides</taxon>
    </lineage>
</organism>
<gene>
    <name evidence="1" type="primary">acpS</name>
    <name type="ordered locus">DET0445</name>
</gene>
<accession>Q3Z9B0</accession>
<proteinExistence type="inferred from homology"/>
<sequence length="119" mass="13161">MLYTGTDIIEIRRIKAAQARWGKRFLNRIFTPAELSLCKDRLPSLAARFAAKEAVIKALSLPKNQSYSEIETLNLPDGQPSVNLYGQALAKAITLGIKQISVSLSHCREYAIAMVVAQD</sequence>
<keyword id="KW-0963">Cytoplasm</keyword>
<keyword id="KW-0275">Fatty acid biosynthesis</keyword>
<keyword id="KW-0276">Fatty acid metabolism</keyword>
<keyword id="KW-0444">Lipid biosynthesis</keyword>
<keyword id="KW-0443">Lipid metabolism</keyword>
<keyword id="KW-0460">Magnesium</keyword>
<keyword id="KW-0479">Metal-binding</keyword>
<keyword id="KW-0808">Transferase</keyword>
<feature type="chain" id="PRO_0000228282" description="Holo-[acyl-carrier-protein] synthase">
    <location>
        <begin position="1"/>
        <end position="119"/>
    </location>
</feature>
<feature type="binding site" evidence="1">
    <location>
        <position position="7"/>
    </location>
    <ligand>
        <name>Mg(2+)</name>
        <dbReference type="ChEBI" id="CHEBI:18420"/>
    </ligand>
</feature>
<feature type="binding site" evidence="1">
    <location>
        <position position="53"/>
    </location>
    <ligand>
        <name>Mg(2+)</name>
        <dbReference type="ChEBI" id="CHEBI:18420"/>
    </ligand>
</feature>
<protein>
    <recommendedName>
        <fullName evidence="1">Holo-[acyl-carrier-protein] synthase</fullName>
        <shortName evidence="1">Holo-ACP synthase</shortName>
        <ecNumber evidence="1">2.7.8.7</ecNumber>
    </recommendedName>
    <alternativeName>
        <fullName evidence="1">4'-phosphopantetheinyl transferase AcpS</fullName>
    </alternativeName>
</protein>
<evidence type="ECO:0000255" key="1">
    <source>
        <dbReference type="HAMAP-Rule" id="MF_00101"/>
    </source>
</evidence>
<name>ACPS_DEHM1</name>
<comment type="function">
    <text evidence="1">Transfers the 4'-phosphopantetheine moiety from coenzyme A to a Ser of acyl-carrier-protein.</text>
</comment>
<comment type="catalytic activity">
    <reaction evidence="1">
        <text>apo-[ACP] + CoA = holo-[ACP] + adenosine 3',5'-bisphosphate + H(+)</text>
        <dbReference type="Rhea" id="RHEA:12068"/>
        <dbReference type="Rhea" id="RHEA-COMP:9685"/>
        <dbReference type="Rhea" id="RHEA-COMP:9690"/>
        <dbReference type="ChEBI" id="CHEBI:15378"/>
        <dbReference type="ChEBI" id="CHEBI:29999"/>
        <dbReference type="ChEBI" id="CHEBI:57287"/>
        <dbReference type="ChEBI" id="CHEBI:58343"/>
        <dbReference type="ChEBI" id="CHEBI:64479"/>
        <dbReference type="EC" id="2.7.8.7"/>
    </reaction>
</comment>
<comment type="cofactor">
    <cofactor evidence="1">
        <name>Mg(2+)</name>
        <dbReference type="ChEBI" id="CHEBI:18420"/>
    </cofactor>
</comment>
<comment type="subcellular location">
    <subcellularLocation>
        <location evidence="1">Cytoplasm</location>
    </subcellularLocation>
</comment>
<comment type="similarity">
    <text evidence="1">Belongs to the P-Pant transferase superfamily. AcpS family.</text>
</comment>
<dbReference type="EC" id="2.7.8.7" evidence="1"/>
<dbReference type="EMBL" id="CP000027">
    <property type="protein sequence ID" value="AAW40250.1"/>
    <property type="molecule type" value="Genomic_DNA"/>
</dbReference>
<dbReference type="RefSeq" id="WP_010936222.1">
    <property type="nucleotide sequence ID" value="NC_002936.3"/>
</dbReference>
<dbReference type="SMR" id="Q3Z9B0"/>
<dbReference type="FunCoup" id="Q3Z9B0">
    <property type="interactions" value="78"/>
</dbReference>
<dbReference type="STRING" id="243164.DET0445"/>
<dbReference type="GeneID" id="3230214"/>
<dbReference type="KEGG" id="det:DET0445"/>
<dbReference type="PATRIC" id="fig|243164.10.peg.423"/>
<dbReference type="eggNOG" id="COG0736">
    <property type="taxonomic scope" value="Bacteria"/>
</dbReference>
<dbReference type="HOGENOM" id="CLU_089696_0_2_0"/>
<dbReference type="InParanoid" id="Q3Z9B0"/>
<dbReference type="Proteomes" id="UP000008289">
    <property type="component" value="Chromosome"/>
</dbReference>
<dbReference type="GO" id="GO:0005737">
    <property type="term" value="C:cytoplasm"/>
    <property type="evidence" value="ECO:0007669"/>
    <property type="project" value="UniProtKB-SubCell"/>
</dbReference>
<dbReference type="GO" id="GO:0008897">
    <property type="term" value="F:holo-[acyl-carrier-protein] synthase activity"/>
    <property type="evidence" value="ECO:0007669"/>
    <property type="project" value="UniProtKB-UniRule"/>
</dbReference>
<dbReference type="GO" id="GO:0000287">
    <property type="term" value="F:magnesium ion binding"/>
    <property type="evidence" value="ECO:0007669"/>
    <property type="project" value="UniProtKB-UniRule"/>
</dbReference>
<dbReference type="GO" id="GO:0006633">
    <property type="term" value="P:fatty acid biosynthetic process"/>
    <property type="evidence" value="ECO:0007669"/>
    <property type="project" value="UniProtKB-UniRule"/>
</dbReference>
<dbReference type="Gene3D" id="3.90.470.20">
    <property type="entry name" value="4'-phosphopantetheinyl transferase domain"/>
    <property type="match status" value="1"/>
</dbReference>
<dbReference type="HAMAP" id="MF_00101">
    <property type="entry name" value="AcpS"/>
    <property type="match status" value="1"/>
</dbReference>
<dbReference type="InterPro" id="IPR008278">
    <property type="entry name" value="4-PPantetheinyl_Trfase_dom"/>
</dbReference>
<dbReference type="InterPro" id="IPR037143">
    <property type="entry name" value="4-PPantetheinyl_Trfase_dom_sf"/>
</dbReference>
<dbReference type="InterPro" id="IPR002582">
    <property type="entry name" value="ACPS"/>
</dbReference>
<dbReference type="InterPro" id="IPR004568">
    <property type="entry name" value="Ppantetheine-prot_Trfase_dom"/>
</dbReference>
<dbReference type="NCBIfam" id="TIGR00516">
    <property type="entry name" value="acpS"/>
    <property type="match status" value="1"/>
</dbReference>
<dbReference type="NCBIfam" id="TIGR00556">
    <property type="entry name" value="pantethn_trn"/>
    <property type="match status" value="1"/>
</dbReference>
<dbReference type="Pfam" id="PF01648">
    <property type="entry name" value="ACPS"/>
    <property type="match status" value="1"/>
</dbReference>
<dbReference type="SUPFAM" id="SSF56214">
    <property type="entry name" value="4'-phosphopantetheinyl transferase"/>
    <property type="match status" value="1"/>
</dbReference>
<reference key="1">
    <citation type="journal article" date="2005" name="Science">
        <title>Genome sequence of the PCE-dechlorinating bacterium Dehalococcoides ethenogenes.</title>
        <authorList>
            <person name="Seshadri R."/>
            <person name="Adrian L."/>
            <person name="Fouts D.E."/>
            <person name="Eisen J.A."/>
            <person name="Phillippy A.M."/>
            <person name="Methe B.A."/>
            <person name="Ward N.L."/>
            <person name="Nelson W.C."/>
            <person name="DeBoy R.T."/>
            <person name="Khouri H.M."/>
            <person name="Kolonay J.F."/>
            <person name="Dodson R.J."/>
            <person name="Daugherty S.C."/>
            <person name="Brinkac L.M."/>
            <person name="Sullivan S.A."/>
            <person name="Madupu R."/>
            <person name="Nelson K.E."/>
            <person name="Kang K.H."/>
            <person name="Impraim M."/>
            <person name="Tran K."/>
            <person name="Robinson J.M."/>
            <person name="Forberger H.A."/>
            <person name="Fraser C.M."/>
            <person name="Zinder S.H."/>
            <person name="Heidelberg J.F."/>
        </authorList>
    </citation>
    <scope>NUCLEOTIDE SEQUENCE [LARGE SCALE GENOMIC DNA]</scope>
    <source>
        <strain>ATCC BAA-2266 / KCTC 15142 / 195</strain>
    </source>
</reference>